<dbReference type="EMBL" id="CP000253">
    <property type="protein sequence ID" value="ABD31462.1"/>
    <property type="molecule type" value="Genomic_DNA"/>
</dbReference>
<dbReference type="RefSeq" id="WP_000215236.1">
    <property type="nucleotide sequence ID" value="NZ_LS483365.1"/>
</dbReference>
<dbReference type="RefSeq" id="YP_500909.1">
    <property type="nucleotide sequence ID" value="NC_007795.1"/>
</dbReference>
<dbReference type="SMR" id="Q2FW66"/>
<dbReference type="STRING" id="93061.SAOUHSC_02441"/>
<dbReference type="PaxDb" id="1280-SAXN108_2434"/>
<dbReference type="GeneID" id="3919005"/>
<dbReference type="KEGG" id="sao:SAOUHSC_02441"/>
<dbReference type="PATRIC" id="fig|93061.5.peg.2201"/>
<dbReference type="eggNOG" id="COG1302">
    <property type="taxonomic scope" value="Bacteria"/>
</dbReference>
<dbReference type="HOGENOM" id="CLU_113198_1_1_9"/>
<dbReference type="OrthoDB" id="9808942at2"/>
<dbReference type="PRO" id="PR:Q2FW66"/>
<dbReference type="Proteomes" id="UP000008816">
    <property type="component" value="Chromosome"/>
</dbReference>
<dbReference type="InterPro" id="IPR005531">
    <property type="entry name" value="Asp23"/>
</dbReference>
<dbReference type="PANTHER" id="PTHR34297:SF3">
    <property type="entry name" value="ALKALINE SHOCK PROTEIN 23"/>
    <property type="match status" value="1"/>
</dbReference>
<dbReference type="PANTHER" id="PTHR34297">
    <property type="entry name" value="HYPOTHETICAL CYTOSOLIC PROTEIN-RELATED"/>
    <property type="match status" value="1"/>
</dbReference>
<dbReference type="Pfam" id="PF03780">
    <property type="entry name" value="Asp23"/>
    <property type="match status" value="1"/>
</dbReference>
<name>ASP23_STAA8</name>
<comment type="function">
    <text evidence="1">May play a key role in alkaline pH tolerance.</text>
</comment>
<comment type="similarity">
    <text evidence="3">Belongs to the asp23 family.</text>
</comment>
<protein>
    <recommendedName>
        <fullName>Alkaline shock protein 23</fullName>
    </recommendedName>
</protein>
<proteinExistence type="inferred from homology"/>
<gene>
    <name type="primary">asp23</name>
    <name type="ordered locus">SAOUHSC_02441</name>
</gene>
<feature type="chain" id="PRO_0000296115" description="Alkaline shock protein 23">
    <location>
        <begin position="1"/>
        <end position="169"/>
    </location>
</feature>
<feature type="region of interest" description="Disordered" evidence="2">
    <location>
        <begin position="1"/>
        <end position="40"/>
    </location>
</feature>
<feature type="region of interest" description="Disordered" evidence="2">
    <location>
        <begin position="148"/>
        <end position="169"/>
    </location>
</feature>
<feature type="compositionally biased region" description="Basic and acidic residues" evidence="2">
    <location>
        <begin position="19"/>
        <end position="29"/>
    </location>
</feature>
<feature type="compositionally biased region" description="Basic and acidic residues" evidence="2">
    <location>
        <begin position="148"/>
        <end position="158"/>
    </location>
</feature>
<feature type="compositionally biased region" description="Low complexity" evidence="2">
    <location>
        <begin position="159"/>
        <end position="169"/>
    </location>
</feature>
<evidence type="ECO:0000250" key="1"/>
<evidence type="ECO:0000256" key="2">
    <source>
        <dbReference type="SAM" id="MobiDB-lite"/>
    </source>
</evidence>
<evidence type="ECO:0000305" key="3"/>
<organism>
    <name type="scientific">Staphylococcus aureus (strain NCTC 8325 / PS 47)</name>
    <dbReference type="NCBI Taxonomy" id="93061"/>
    <lineage>
        <taxon>Bacteria</taxon>
        <taxon>Bacillati</taxon>
        <taxon>Bacillota</taxon>
        <taxon>Bacilli</taxon>
        <taxon>Bacillales</taxon>
        <taxon>Staphylococcaceae</taxon>
        <taxon>Staphylococcus</taxon>
    </lineage>
</organism>
<keyword id="KW-1185">Reference proteome</keyword>
<accession>Q2FW66</accession>
<reference key="1">
    <citation type="book" date="2006" name="Gram positive pathogens, 2nd edition">
        <title>The Staphylococcus aureus NCTC 8325 genome.</title>
        <editorList>
            <person name="Fischetti V."/>
            <person name="Novick R."/>
            <person name="Ferretti J."/>
            <person name="Portnoy D."/>
            <person name="Rood J."/>
        </editorList>
        <authorList>
            <person name="Gillaspy A.F."/>
            <person name="Worrell V."/>
            <person name="Orvis J."/>
            <person name="Roe B.A."/>
            <person name="Dyer D.W."/>
            <person name="Iandolo J.J."/>
        </authorList>
    </citation>
    <scope>NUCLEOTIDE SEQUENCE [LARGE SCALE GENOMIC DNA]</scope>
    <source>
        <strain>NCTC 8325 / PS 47</strain>
    </source>
</reference>
<sequence length="169" mass="19191">MTVDNNKAKQAYDNQTGVNEKEREERQKQQEQNQEPQFKNKLTFSDEVVEKIAGIAAREVKGILDMKGGLTDTFTNAFSSGNNVTQGVSVEVGEKQAAVDLKVILEYGESAPKIFRKVTELVKEQVKYITGLDVVEVNMQVDDVMTQKEWKQKHEKNNENNNQERQGLQ</sequence>